<sequence length="139" mass="14841">MTEKRFAGTRIEVNGIVVAKITSFTHSLEVEEADVTGLGDVDEGSSVFRQKFIASAIGETAAMEGVVLVDDAGQSELKRVAESGQDAVVKHTDENGNGYELTGFFTTYEEEGSVSEGVYTFSGEFRVNEKSVVSGDESA</sequence>
<gene>
    <name type="ordered locus">BH0010</name>
</gene>
<dbReference type="EMBL" id="AB013492">
    <property type="protein sequence ID" value="BAA82694.1"/>
    <property type="molecule type" value="Genomic_DNA"/>
</dbReference>
<dbReference type="EMBL" id="BA000004">
    <property type="protein sequence ID" value="BAB03729.1"/>
    <property type="molecule type" value="Genomic_DNA"/>
</dbReference>
<dbReference type="PIR" id="B83651">
    <property type="entry name" value="B83651"/>
</dbReference>
<dbReference type="RefSeq" id="WP_010896194.1">
    <property type="nucleotide sequence ID" value="NC_002570.2"/>
</dbReference>
<dbReference type="STRING" id="272558.gene:10725825"/>
<dbReference type="GeneID" id="87595524"/>
<dbReference type="KEGG" id="bha:BH0010"/>
<dbReference type="eggNOG" id="ENOG5030CMK">
    <property type="taxonomic scope" value="Bacteria"/>
</dbReference>
<dbReference type="HOGENOM" id="CLU_1811933_0_0_9"/>
<dbReference type="OrthoDB" id="2866549at2"/>
<dbReference type="Proteomes" id="UP000001258">
    <property type="component" value="Chromosome"/>
</dbReference>
<name>Y010_HALH5</name>
<protein>
    <recommendedName>
        <fullName>Uncharacterized protein BH0010</fullName>
    </recommendedName>
</protein>
<reference key="1">
    <citation type="journal article" date="1999" name="Biosci. Biotechnol. Biochem.">
        <title>Replication origin region of the chromosome of alkaliphilic Bacillus halodurans C-125.</title>
        <authorList>
            <person name="Takami H."/>
            <person name="Masui N."/>
            <person name="Nakasone K."/>
            <person name="Horikoshi K."/>
        </authorList>
    </citation>
    <scope>NUCLEOTIDE SEQUENCE [GENOMIC DNA]</scope>
    <source>
        <strain>ATCC BAA-125 / DSM 18197 / FERM 7344 / JCM 9153 / C-125</strain>
    </source>
</reference>
<reference key="2">
    <citation type="journal article" date="2000" name="Nucleic Acids Res.">
        <title>Complete genome sequence of the alkaliphilic bacterium Bacillus halodurans and genomic sequence comparison with Bacillus subtilis.</title>
        <authorList>
            <person name="Takami H."/>
            <person name="Nakasone K."/>
            <person name="Takaki Y."/>
            <person name="Maeno G."/>
            <person name="Sasaki R."/>
            <person name="Masui N."/>
            <person name="Fuji F."/>
            <person name="Hirama C."/>
            <person name="Nakamura Y."/>
            <person name="Ogasawara N."/>
            <person name="Kuhara S."/>
            <person name="Horikoshi K."/>
        </authorList>
    </citation>
    <scope>NUCLEOTIDE SEQUENCE [LARGE SCALE GENOMIC DNA]</scope>
    <source>
        <strain>ATCC BAA-125 / DSM 18197 / FERM 7344 / JCM 9153 / C-125</strain>
    </source>
</reference>
<keyword id="KW-1185">Reference proteome</keyword>
<feature type="chain" id="PRO_0000220725" description="Uncharacterized protein BH0010">
    <location>
        <begin position="1"/>
        <end position="139"/>
    </location>
</feature>
<proteinExistence type="predicted"/>
<organism>
    <name type="scientific">Halalkalibacterium halodurans (strain ATCC BAA-125 / DSM 18197 / FERM 7344 / JCM 9153 / C-125)</name>
    <name type="common">Bacillus halodurans</name>
    <dbReference type="NCBI Taxonomy" id="272558"/>
    <lineage>
        <taxon>Bacteria</taxon>
        <taxon>Bacillati</taxon>
        <taxon>Bacillota</taxon>
        <taxon>Bacilli</taxon>
        <taxon>Bacillales</taxon>
        <taxon>Bacillaceae</taxon>
        <taxon>Halalkalibacterium (ex Joshi et al. 2022)</taxon>
    </lineage>
</organism>
<accession>Q9RC95</accession>